<accession>A5IQA0</accession>
<evidence type="ECO:0000255" key="1">
    <source>
        <dbReference type="HAMAP-Rule" id="MF_00480"/>
    </source>
</evidence>
<evidence type="ECO:0000305" key="2"/>
<keyword id="KW-0687">Ribonucleoprotein</keyword>
<keyword id="KW-0689">Ribosomal protein</keyword>
<keyword id="KW-0694">RNA-binding</keyword>
<keyword id="KW-0699">rRNA-binding</keyword>
<keyword id="KW-0820">tRNA-binding</keyword>
<dbReference type="EMBL" id="CP000703">
    <property type="protein sequence ID" value="ABQ48373.1"/>
    <property type="molecule type" value="Genomic_DNA"/>
</dbReference>
<dbReference type="RefSeq" id="WP_001137495.1">
    <property type="nucleotide sequence ID" value="NC_009487.1"/>
</dbReference>
<dbReference type="SMR" id="A5IQA0"/>
<dbReference type="GeneID" id="98344880"/>
<dbReference type="KEGG" id="saj:SaurJH9_0569"/>
<dbReference type="HOGENOM" id="CLU_072226_1_1_9"/>
<dbReference type="GO" id="GO:0015935">
    <property type="term" value="C:small ribosomal subunit"/>
    <property type="evidence" value="ECO:0007669"/>
    <property type="project" value="InterPro"/>
</dbReference>
<dbReference type="GO" id="GO:0019843">
    <property type="term" value="F:rRNA binding"/>
    <property type="evidence" value="ECO:0007669"/>
    <property type="project" value="UniProtKB-UniRule"/>
</dbReference>
<dbReference type="GO" id="GO:0003735">
    <property type="term" value="F:structural constituent of ribosome"/>
    <property type="evidence" value="ECO:0007669"/>
    <property type="project" value="InterPro"/>
</dbReference>
<dbReference type="GO" id="GO:0000049">
    <property type="term" value="F:tRNA binding"/>
    <property type="evidence" value="ECO:0007669"/>
    <property type="project" value="UniProtKB-UniRule"/>
</dbReference>
<dbReference type="GO" id="GO:0006412">
    <property type="term" value="P:translation"/>
    <property type="evidence" value="ECO:0007669"/>
    <property type="project" value="UniProtKB-UniRule"/>
</dbReference>
<dbReference type="CDD" id="cd14869">
    <property type="entry name" value="uS7_Bacteria"/>
    <property type="match status" value="1"/>
</dbReference>
<dbReference type="FunFam" id="1.10.455.10:FF:000001">
    <property type="entry name" value="30S ribosomal protein S7"/>
    <property type="match status" value="1"/>
</dbReference>
<dbReference type="Gene3D" id="1.10.455.10">
    <property type="entry name" value="Ribosomal protein S7 domain"/>
    <property type="match status" value="1"/>
</dbReference>
<dbReference type="HAMAP" id="MF_00480_B">
    <property type="entry name" value="Ribosomal_uS7_B"/>
    <property type="match status" value="1"/>
</dbReference>
<dbReference type="InterPro" id="IPR000235">
    <property type="entry name" value="Ribosomal_uS7"/>
</dbReference>
<dbReference type="InterPro" id="IPR005717">
    <property type="entry name" value="Ribosomal_uS7_bac/org-type"/>
</dbReference>
<dbReference type="InterPro" id="IPR020606">
    <property type="entry name" value="Ribosomal_uS7_CS"/>
</dbReference>
<dbReference type="InterPro" id="IPR023798">
    <property type="entry name" value="Ribosomal_uS7_dom"/>
</dbReference>
<dbReference type="InterPro" id="IPR036823">
    <property type="entry name" value="Ribosomal_uS7_dom_sf"/>
</dbReference>
<dbReference type="NCBIfam" id="TIGR01029">
    <property type="entry name" value="rpsG_bact"/>
    <property type="match status" value="1"/>
</dbReference>
<dbReference type="PANTHER" id="PTHR11205">
    <property type="entry name" value="RIBOSOMAL PROTEIN S7"/>
    <property type="match status" value="1"/>
</dbReference>
<dbReference type="Pfam" id="PF00177">
    <property type="entry name" value="Ribosomal_S7"/>
    <property type="match status" value="1"/>
</dbReference>
<dbReference type="PIRSF" id="PIRSF002122">
    <property type="entry name" value="RPS7p_RPS7a_RPS5e_RPS7o"/>
    <property type="match status" value="1"/>
</dbReference>
<dbReference type="SUPFAM" id="SSF47973">
    <property type="entry name" value="Ribosomal protein S7"/>
    <property type="match status" value="1"/>
</dbReference>
<dbReference type="PROSITE" id="PS00052">
    <property type="entry name" value="RIBOSOMAL_S7"/>
    <property type="match status" value="1"/>
</dbReference>
<protein>
    <recommendedName>
        <fullName evidence="1">Small ribosomal subunit protein uS7</fullName>
    </recommendedName>
    <alternativeName>
        <fullName evidence="2">30S ribosomal protein S7</fullName>
    </alternativeName>
</protein>
<comment type="function">
    <text evidence="1">One of the primary rRNA binding proteins, it binds directly to 16S rRNA where it nucleates assembly of the head domain of the 30S subunit. Is located at the subunit interface close to the decoding center, probably blocks exit of the E-site tRNA.</text>
</comment>
<comment type="subunit">
    <text evidence="1">Part of the 30S ribosomal subunit. Contacts proteins S9 and S11.</text>
</comment>
<comment type="similarity">
    <text evidence="1">Belongs to the universal ribosomal protein uS7 family.</text>
</comment>
<gene>
    <name evidence="1" type="primary">rpsG</name>
    <name type="ordered locus">SaurJH9_0569</name>
</gene>
<reference key="1">
    <citation type="submission" date="2007-05" db="EMBL/GenBank/DDBJ databases">
        <title>Complete sequence of chromosome of Staphylococcus aureus subsp. aureus JH9.</title>
        <authorList>
            <consortium name="US DOE Joint Genome Institute"/>
            <person name="Copeland A."/>
            <person name="Lucas S."/>
            <person name="Lapidus A."/>
            <person name="Barry K."/>
            <person name="Detter J.C."/>
            <person name="Glavina del Rio T."/>
            <person name="Hammon N."/>
            <person name="Israni S."/>
            <person name="Pitluck S."/>
            <person name="Chain P."/>
            <person name="Malfatti S."/>
            <person name="Shin M."/>
            <person name="Vergez L."/>
            <person name="Schmutz J."/>
            <person name="Larimer F."/>
            <person name="Land M."/>
            <person name="Hauser L."/>
            <person name="Kyrpides N."/>
            <person name="Kim E."/>
            <person name="Tomasz A."/>
            <person name="Richardson P."/>
        </authorList>
    </citation>
    <scope>NUCLEOTIDE SEQUENCE [LARGE SCALE GENOMIC DNA]</scope>
    <source>
        <strain>JH9</strain>
    </source>
</reference>
<feature type="chain" id="PRO_1000081308" description="Small ribosomal subunit protein uS7">
    <location>
        <begin position="1"/>
        <end position="156"/>
    </location>
</feature>
<name>RS7_STAA9</name>
<proteinExistence type="inferred from homology"/>
<organism>
    <name type="scientific">Staphylococcus aureus (strain JH9)</name>
    <dbReference type="NCBI Taxonomy" id="359786"/>
    <lineage>
        <taxon>Bacteria</taxon>
        <taxon>Bacillati</taxon>
        <taxon>Bacillota</taxon>
        <taxon>Bacilli</taxon>
        <taxon>Bacillales</taxon>
        <taxon>Staphylococcaceae</taxon>
        <taxon>Staphylococcus</taxon>
    </lineage>
</organism>
<sequence length="156" mass="17795">MPRKGSVPKRDVLPDPIHNSKLVTKLINKIMLDGKRGTAQRILYSAFDLVEQRSGRDALEVFEEAINNIMPVLEVKARRVGGSNYQVPVEVRPERRTTLGLRWLVNYARLRGEKTMEDRLANEILDAANNTGGAVKKREDTHKMAEANKAFAHYRW</sequence>